<sequence length="96" mass="10127">MKCFAQIVVLLLVIAFSHGAVITGVCDRDAQCGSGTCCAASAFSRNIRFCVPLGNNGEECHPASHKVPYNGKRLSSLCPCNTGLTCPKSGEKFQCS</sequence>
<feature type="signal peptide" evidence="1">
    <location>
        <begin position="1"/>
        <end position="19"/>
    </location>
</feature>
<feature type="chain" id="PRO_0000265776" description="Prokineticin Bm8-e">
    <location>
        <begin position="20"/>
        <end position="96"/>
    </location>
</feature>
<feature type="disulfide bond" evidence="1">
    <location>
        <begin position="26"/>
        <end position="38"/>
    </location>
</feature>
<feature type="disulfide bond" evidence="1">
    <location>
        <begin position="32"/>
        <end position="50"/>
    </location>
</feature>
<feature type="disulfide bond" evidence="1">
    <location>
        <begin position="37"/>
        <end position="78"/>
    </location>
</feature>
<feature type="disulfide bond" evidence="1">
    <location>
        <begin position="60"/>
        <end position="86"/>
    </location>
</feature>
<feature type="disulfide bond" evidence="1">
    <location>
        <begin position="80"/>
        <end position="95"/>
    </location>
</feature>
<name>BM8E_BOMMX</name>
<evidence type="ECO:0000250" key="1">
    <source>
        <dbReference type="UniProtKB" id="Q9PW66"/>
    </source>
</evidence>
<evidence type="ECO:0000305" key="2"/>
<reference key="1">
    <citation type="journal article" date="2003" name="Biochem. J.">
        <title>Granular gland transcriptomes in stimulated amphibian skin secretions.</title>
        <authorList>
            <person name="Chen T."/>
            <person name="Farragher S.M."/>
            <person name="Bjourson A.J."/>
            <person name="Orr D.F."/>
            <person name="Rao P."/>
            <person name="Shaw C."/>
        </authorList>
    </citation>
    <scope>NUCLEOTIDE SEQUENCE [MRNA]</scope>
    <source>
        <tissue>Skin secretion</tissue>
    </source>
</reference>
<protein>
    <recommendedName>
        <fullName>Prokineticin Bm8-e</fullName>
    </recommendedName>
</protein>
<keyword id="KW-1015">Disulfide bond</keyword>
<keyword id="KW-1213">G-protein coupled receptor impairing toxin</keyword>
<keyword id="KW-0964">Secreted</keyword>
<keyword id="KW-0732">Signal</keyword>
<keyword id="KW-0800">Toxin</keyword>
<dbReference type="EMBL" id="AJ440234">
    <property type="protein sequence ID" value="CAD29344.1"/>
    <property type="molecule type" value="mRNA"/>
</dbReference>
<dbReference type="SMR" id="Q8JFX9"/>
<dbReference type="GO" id="GO:0005576">
    <property type="term" value="C:extracellular region"/>
    <property type="evidence" value="ECO:0007669"/>
    <property type="project" value="UniProtKB-SubCell"/>
</dbReference>
<dbReference type="GO" id="GO:0090729">
    <property type="term" value="F:toxin activity"/>
    <property type="evidence" value="ECO:0007669"/>
    <property type="project" value="UniProtKB-KW"/>
</dbReference>
<dbReference type="GO" id="GO:0001935">
    <property type="term" value="P:endothelial cell proliferation"/>
    <property type="evidence" value="ECO:0007669"/>
    <property type="project" value="TreeGrafter"/>
</dbReference>
<dbReference type="Gene3D" id="2.10.80.10">
    <property type="entry name" value="Lipase, subunit A"/>
    <property type="match status" value="1"/>
</dbReference>
<dbReference type="InterPro" id="IPR009523">
    <property type="entry name" value="Prokineticin"/>
</dbReference>
<dbReference type="InterPro" id="IPR023569">
    <property type="entry name" value="Prokineticin_domain"/>
</dbReference>
<dbReference type="PANTHER" id="PTHR18821:SF2">
    <property type="entry name" value="DICKKOPF-RELATED PROTEIN 3-LIKE"/>
    <property type="match status" value="1"/>
</dbReference>
<dbReference type="PANTHER" id="PTHR18821">
    <property type="entry name" value="PROKINETICIN"/>
    <property type="match status" value="1"/>
</dbReference>
<dbReference type="Pfam" id="PF06607">
    <property type="entry name" value="Prokineticin"/>
    <property type="match status" value="1"/>
</dbReference>
<dbReference type="SUPFAM" id="SSF57190">
    <property type="entry name" value="Colipase-like"/>
    <property type="match status" value="2"/>
</dbReference>
<comment type="function">
    <text evidence="1">Potent agonist for both PKR1/PROKR1 and PKR2/PROKR2, and inducer of a potent and long-lasting hyperalgesia. Also potentiates capsaicin-induced TRPV1 current, when tested on DRG neurons. At subnanomolar concentrations, this protein both induces potent chemotaxis of macrophages and stimulates LPS-induced production of the pro-inflammatory cytokines IL-1 and IL-12. In vivo, potently stimulates the contraction of the guinea-pig gastrointestinal (GI) smooth muscle (nanomolar concentration).</text>
</comment>
<comment type="subcellular location">
    <subcellularLocation>
        <location>Secreted</location>
    </subcellularLocation>
</comment>
<comment type="tissue specificity">
    <text>Expressed by the skin glands.</text>
</comment>
<comment type="similarity">
    <text evidence="2">Belongs to the AVIT (prokineticin) family.</text>
</comment>
<accession>Q8JFX9</accession>
<proteinExistence type="evidence at transcript level"/>
<organism>
    <name type="scientific">Bombina maxima</name>
    <name type="common">Giant fire-bellied toad</name>
    <name type="synonym">Chinese red belly toad</name>
    <dbReference type="NCBI Taxonomy" id="161274"/>
    <lineage>
        <taxon>Eukaryota</taxon>
        <taxon>Metazoa</taxon>
        <taxon>Chordata</taxon>
        <taxon>Craniata</taxon>
        <taxon>Vertebrata</taxon>
        <taxon>Euteleostomi</taxon>
        <taxon>Amphibia</taxon>
        <taxon>Batrachia</taxon>
        <taxon>Anura</taxon>
        <taxon>Bombinatoridae</taxon>
        <taxon>Bombina</taxon>
    </lineage>
</organism>